<proteinExistence type="inferred from homology"/>
<protein>
    <recommendedName>
        <fullName evidence="1">Imidazoleglycerol-phosphate dehydratase</fullName>
        <shortName evidence="1">IGPD</shortName>
        <ecNumber evidence="1">4.2.1.19</ecNumber>
    </recommendedName>
</protein>
<comment type="catalytic activity">
    <reaction evidence="1">
        <text>D-erythro-1-(imidazol-4-yl)glycerol 3-phosphate = 3-(imidazol-4-yl)-2-oxopropyl phosphate + H2O</text>
        <dbReference type="Rhea" id="RHEA:11040"/>
        <dbReference type="ChEBI" id="CHEBI:15377"/>
        <dbReference type="ChEBI" id="CHEBI:57766"/>
        <dbReference type="ChEBI" id="CHEBI:58278"/>
        <dbReference type="EC" id="4.2.1.19"/>
    </reaction>
</comment>
<comment type="pathway">
    <text evidence="1">Amino-acid biosynthesis; L-histidine biosynthesis; L-histidine from 5-phospho-alpha-D-ribose 1-diphosphate: step 6/9.</text>
</comment>
<comment type="subcellular location">
    <subcellularLocation>
        <location evidence="1">Cytoplasm</location>
    </subcellularLocation>
</comment>
<comment type="similarity">
    <text evidence="1">Belongs to the imidazoleglycerol-phosphate dehydratase family.</text>
</comment>
<feature type="chain" id="PRO_1000010277" description="Imidazoleglycerol-phosphate dehydratase">
    <location>
        <begin position="1"/>
        <end position="197"/>
    </location>
</feature>
<evidence type="ECO:0000255" key="1">
    <source>
        <dbReference type="HAMAP-Rule" id="MF_00076"/>
    </source>
</evidence>
<reference key="1">
    <citation type="journal article" date="2009" name="J. Bacteriol.">
        <title>Complete genome sequence of Erythrobacter litoralis HTCC2594.</title>
        <authorList>
            <person name="Oh H.M."/>
            <person name="Giovannoni S.J."/>
            <person name="Ferriera S."/>
            <person name="Johnson J."/>
            <person name="Cho J.C."/>
        </authorList>
    </citation>
    <scope>NUCLEOTIDE SEQUENCE [LARGE SCALE GENOMIC DNA]</scope>
    <source>
        <strain>HTCC2594</strain>
    </source>
</reference>
<name>HIS7_ERYLH</name>
<keyword id="KW-0028">Amino-acid biosynthesis</keyword>
<keyword id="KW-0963">Cytoplasm</keyword>
<keyword id="KW-0368">Histidine biosynthesis</keyword>
<keyword id="KW-0456">Lyase</keyword>
<keyword id="KW-1185">Reference proteome</keyword>
<sequence length="197" mass="21614">MRTGRIERNTAETRILIEVNLDGRGNYDVSTGIGFLDHMVEQFSKHSLIDVTMKVDGDLHVDQHHTTEDSAIALGQALGEALGDKAGIGRYGQAYSPMDETLSRVALDISGRPYTVFRAGFSQEKLGEWDTELIEHWFQSVAQAAGITLHIELLYGTNNHHICESIYKGFARAMRQAVELDGRKGGAIPSTKGQLGG</sequence>
<dbReference type="EC" id="4.2.1.19" evidence="1"/>
<dbReference type="EMBL" id="CP000157">
    <property type="protein sequence ID" value="ABC64006.1"/>
    <property type="molecule type" value="Genomic_DNA"/>
</dbReference>
<dbReference type="RefSeq" id="WP_011414834.1">
    <property type="nucleotide sequence ID" value="NC_007722.1"/>
</dbReference>
<dbReference type="SMR" id="Q2N8I5"/>
<dbReference type="STRING" id="314225.ELI_09570"/>
<dbReference type="KEGG" id="eli:ELI_09570"/>
<dbReference type="eggNOG" id="COG0131">
    <property type="taxonomic scope" value="Bacteria"/>
</dbReference>
<dbReference type="HOGENOM" id="CLU_044308_3_0_5"/>
<dbReference type="OrthoDB" id="9813612at2"/>
<dbReference type="UniPathway" id="UPA00031">
    <property type="reaction ID" value="UER00011"/>
</dbReference>
<dbReference type="Proteomes" id="UP000008808">
    <property type="component" value="Chromosome"/>
</dbReference>
<dbReference type="GO" id="GO:0005737">
    <property type="term" value="C:cytoplasm"/>
    <property type="evidence" value="ECO:0007669"/>
    <property type="project" value="UniProtKB-SubCell"/>
</dbReference>
<dbReference type="GO" id="GO:0004424">
    <property type="term" value="F:imidazoleglycerol-phosphate dehydratase activity"/>
    <property type="evidence" value="ECO:0007669"/>
    <property type="project" value="UniProtKB-UniRule"/>
</dbReference>
<dbReference type="GO" id="GO:0000105">
    <property type="term" value="P:L-histidine biosynthetic process"/>
    <property type="evidence" value="ECO:0007669"/>
    <property type="project" value="UniProtKB-UniRule"/>
</dbReference>
<dbReference type="CDD" id="cd07914">
    <property type="entry name" value="IGPD"/>
    <property type="match status" value="1"/>
</dbReference>
<dbReference type="FunFam" id="3.30.230.40:FF:000001">
    <property type="entry name" value="Imidazoleglycerol-phosphate dehydratase HisB"/>
    <property type="match status" value="1"/>
</dbReference>
<dbReference type="FunFam" id="3.30.230.40:FF:000003">
    <property type="entry name" value="Imidazoleglycerol-phosphate dehydratase HisB"/>
    <property type="match status" value="1"/>
</dbReference>
<dbReference type="Gene3D" id="3.30.230.40">
    <property type="entry name" value="Imidazole glycerol phosphate dehydratase, domain 1"/>
    <property type="match status" value="2"/>
</dbReference>
<dbReference type="HAMAP" id="MF_00076">
    <property type="entry name" value="HisB"/>
    <property type="match status" value="1"/>
</dbReference>
<dbReference type="InterPro" id="IPR038494">
    <property type="entry name" value="IGPD_sf"/>
</dbReference>
<dbReference type="InterPro" id="IPR000807">
    <property type="entry name" value="ImidazoleglycerolP_deHydtase"/>
</dbReference>
<dbReference type="InterPro" id="IPR020565">
    <property type="entry name" value="ImidazoleglycerP_deHydtase_CS"/>
</dbReference>
<dbReference type="InterPro" id="IPR020568">
    <property type="entry name" value="Ribosomal_Su5_D2-typ_SF"/>
</dbReference>
<dbReference type="NCBIfam" id="NF002109">
    <property type="entry name" value="PRK00951.1-5"/>
    <property type="match status" value="1"/>
</dbReference>
<dbReference type="NCBIfam" id="NF002111">
    <property type="entry name" value="PRK00951.2-1"/>
    <property type="match status" value="1"/>
</dbReference>
<dbReference type="NCBIfam" id="NF002114">
    <property type="entry name" value="PRK00951.2-4"/>
    <property type="match status" value="1"/>
</dbReference>
<dbReference type="PANTHER" id="PTHR23133:SF2">
    <property type="entry name" value="IMIDAZOLEGLYCEROL-PHOSPHATE DEHYDRATASE"/>
    <property type="match status" value="1"/>
</dbReference>
<dbReference type="PANTHER" id="PTHR23133">
    <property type="entry name" value="IMIDAZOLEGLYCEROL-PHOSPHATE DEHYDRATASE HIS7"/>
    <property type="match status" value="1"/>
</dbReference>
<dbReference type="Pfam" id="PF00475">
    <property type="entry name" value="IGPD"/>
    <property type="match status" value="1"/>
</dbReference>
<dbReference type="SUPFAM" id="SSF54211">
    <property type="entry name" value="Ribosomal protein S5 domain 2-like"/>
    <property type="match status" value="2"/>
</dbReference>
<dbReference type="PROSITE" id="PS00954">
    <property type="entry name" value="IGP_DEHYDRATASE_1"/>
    <property type="match status" value="1"/>
</dbReference>
<dbReference type="PROSITE" id="PS00955">
    <property type="entry name" value="IGP_DEHYDRATASE_2"/>
    <property type="match status" value="1"/>
</dbReference>
<accession>Q2N8I5</accession>
<gene>
    <name evidence="1" type="primary">hisB</name>
    <name type="ordered locus">ELI_09570</name>
</gene>
<organism>
    <name type="scientific">Erythrobacter litoralis (strain HTCC2594)</name>
    <dbReference type="NCBI Taxonomy" id="314225"/>
    <lineage>
        <taxon>Bacteria</taxon>
        <taxon>Pseudomonadati</taxon>
        <taxon>Pseudomonadota</taxon>
        <taxon>Alphaproteobacteria</taxon>
        <taxon>Sphingomonadales</taxon>
        <taxon>Erythrobacteraceae</taxon>
        <taxon>Erythrobacter/Porphyrobacter group</taxon>
        <taxon>Erythrobacter</taxon>
    </lineage>
</organism>